<name>IFNG_SIGHI</name>
<feature type="signal peptide" evidence="3">
    <location>
        <begin position="1"/>
        <end position="20"/>
    </location>
</feature>
<feature type="chain" id="PRO_0000016460" description="Interferon gamma">
    <location>
        <begin position="21"/>
        <end position="170"/>
    </location>
</feature>
<feature type="glycosylation site" description="N-linked (GlcNAc...) asparagine" evidence="3">
    <location>
        <position position="36"/>
    </location>
</feature>
<feature type="glycosylation site" description="N-linked (GlcNAc...) asparagine" evidence="3">
    <location>
        <position position="103"/>
    </location>
</feature>
<reference key="1">
    <citation type="submission" date="1999-07" db="EMBL/GenBank/DDBJ databases">
        <authorList>
            <person name="Houard S."/>
        </authorList>
    </citation>
    <scope>NUCLEOTIDE SEQUENCE [MRNA]</scope>
    <source>
        <tissue>Spleen</tissue>
    </source>
</reference>
<organism>
    <name type="scientific">Sigmodon hispidus</name>
    <name type="common">Hispid cotton rat</name>
    <dbReference type="NCBI Taxonomy" id="42415"/>
    <lineage>
        <taxon>Eukaryota</taxon>
        <taxon>Metazoa</taxon>
        <taxon>Chordata</taxon>
        <taxon>Craniata</taxon>
        <taxon>Vertebrata</taxon>
        <taxon>Euteleostomi</taxon>
        <taxon>Mammalia</taxon>
        <taxon>Eutheria</taxon>
        <taxon>Euarchontoglires</taxon>
        <taxon>Glires</taxon>
        <taxon>Rodentia</taxon>
        <taxon>Myomorpha</taxon>
        <taxon>Muroidea</taxon>
        <taxon>Cricetidae</taxon>
        <taxon>Sigmodontinae</taxon>
        <taxon>Sigmodon</taxon>
    </lineage>
</organism>
<gene>
    <name type="primary">IFNG</name>
</gene>
<comment type="function">
    <text evidence="1 2">Type II interferon produced by immune cells such as T-cells and NK cells that plays crucial roles in antimicrobial, antiviral, and antitumor responses by activating effector immune cells and enhancing antigen presentation. Primarily signals through the JAK-STAT pathway after interaction with its receptor IFNGR1 to affect gene regulation. Upon IFNG binding, IFNGR1 intracellular domain opens out to allow association of downstream signaling components JAK2, JAK1 and STAT1, leading to STAT1 activation, nuclear translocation and transcription of IFNG-regulated genes. Many of the induced genes are transcription factors such as IRF1 that are able to further drive regulation of a next wave of transcription. Plays a role in class I antigen presentation pathway by inducing a replacement of catalytic proteasome subunits with immunoproteasome subunits. In turn, increases the quantity, quality, and repertoire of peptides for class I MHC loading. Increases the efficiency of peptide generation also by inducing the expression of activator PA28 that associates with the proteasome and alters its proteolytic cleavage preference. Up-regulates as well MHC II complexes on the cell surface by promoting expression of several key molecules such as cathepsins B/CTSB, H/CTSH, and L/CTSL (By similarity). Participates in the regulation of hematopoietic stem cells during development and under homeostatic conditions by affecting their development, quiescence, and differentiation (By similarity).</text>
</comment>
<comment type="subunit">
    <text evidence="1">Homodimer. Interacts with IFNGR1 (via extracellular domain); this interaction promotes IFNGR1 dimerization.</text>
</comment>
<comment type="subcellular location">
    <subcellularLocation>
        <location evidence="1">Secreted</location>
    </subcellularLocation>
</comment>
<comment type="tissue specificity">
    <text>Released primarily from activated T lymphocytes.</text>
</comment>
<comment type="similarity">
    <text evidence="4">Belongs to the type II (or gamma) interferon family.</text>
</comment>
<evidence type="ECO:0000250" key="1">
    <source>
        <dbReference type="UniProtKB" id="P01579"/>
    </source>
</evidence>
<evidence type="ECO:0000250" key="2">
    <source>
        <dbReference type="UniProtKB" id="P01580"/>
    </source>
</evidence>
<evidence type="ECO:0000255" key="3"/>
<evidence type="ECO:0000305" key="4"/>
<protein>
    <recommendedName>
        <fullName>Interferon gamma</fullName>
        <shortName>IFN-gamma</shortName>
    </recommendedName>
</protein>
<keyword id="KW-0051">Antiviral defense</keyword>
<keyword id="KW-0202">Cytokine</keyword>
<keyword id="KW-0325">Glycoprotein</keyword>
<keyword id="KW-0341">Growth regulation</keyword>
<keyword id="KW-0964">Secreted</keyword>
<keyword id="KW-0732">Signal</keyword>
<sequence length="170" mass="19615">MNSRLCIMALLLCFSQALLGHFTVIEEIEKLKKYFNSSSSDVGDQKDIVSDILRNWQNDRDVKVIESQIVSFYLKLFEALKEHKTIQESINTIRADLIVNFFNNSREKMDDFIKLTTIPVNDLQVQRKAVNELVGVMHRLSSNIRRKKKGSRCCFGGGDRLNQNYPARSI</sequence>
<proteinExistence type="evidence at transcript level"/>
<accession>Q9QXX2</accession>
<dbReference type="EMBL" id="AF167349">
    <property type="protein sequence ID" value="AAF21433.1"/>
    <property type="molecule type" value="mRNA"/>
</dbReference>
<dbReference type="SMR" id="Q9QXX2"/>
<dbReference type="GlyCosmos" id="Q9QXX2">
    <property type="glycosylation" value="2 sites, No reported glycans"/>
</dbReference>
<dbReference type="GO" id="GO:0005615">
    <property type="term" value="C:extracellular space"/>
    <property type="evidence" value="ECO:0007669"/>
    <property type="project" value="UniProtKB-KW"/>
</dbReference>
<dbReference type="GO" id="GO:0005125">
    <property type="term" value="F:cytokine activity"/>
    <property type="evidence" value="ECO:0007669"/>
    <property type="project" value="UniProtKB-KW"/>
</dbReference>
<dbReference type="GO" id="GO:0005133">
    <property type="term" value="F:type II interferon receptor binding"/>
    <property type="evidence" value="ECO:0007669"/>
    <property type="project" value="InterPro"/>
</dbReference>
<dbReference type="GO" id="GO:0002250">
    <property type="term" value="P:adaptive immune response"/>
    <property type="evidence" value="ECO:0007669"/>
    <property type="project" value="TreeGrafter"/>
</dbReference>
<dbReference type="GO" id="GO:0051607">
    <property type="term" value="P:defense response to virus"/>
    <property type="evidence" value="ECO:0007669"/>
    <property type="project" value="UniProtKB-KW"/>
</dbReference>
<dbReference type="GO" id="GO:0006959">
    <property type="term" value="P:humoral immune response"/>
    <property type="evidence" value="ECO:0007669"/>
    <property type="project" value="TreeGrafter"/>
</dbReference>
<dbReference type="FunFam" id="1.20.1250.10:FF:000007">
    <property type="entry name" value="Interferon gamma"/>
    <property type="match status" value="1"/>
</dbReference>
<dbReference type="Gene3D" id="1.20.1250.10">
    <property type="match status" value="1"/>
</dbReference>
<dbReference type="InterPro" id="IPR009079">
    <property type="entry name" value="4_helix_cytokine-like_core"/>
</dbReference>
<dbReference type="InterPro" id="IPR002069">
    <property type="entry name" value="Interferon_gamma"/>
</dbReference>
<dbReference type="PANTHER" id="PTHR11419">
    <property type="entry name" value="INTERFERON GAMMA"/>
    <property type="match status" value="1"/>
</dbReference>
<dbReference type="PANTHER" id="PTHR11419:SF0">
    <property type="entry name" value="INTERFERON GAMMA"/>
    <property type="match status" value="1"/>
</dbReference>
<dbReference type="Pfam" id="PF00714">
    <property type="entry name" value="IFN-gamma"/>
    <property type="match status" value="1"/>
</dbReference>
<dbReference type="PIRSF" id="PIRSF001936">
    <property type="entry name" value="IFN-gamma"/>
    <property type="match status" value="1"/>
</dbReference>
<dbReference type="SUPFAM" id="SSF47266">
    <property type="entry name" value="4-helical cytokines"/>
    <property type="match status" value="1"/>
</dbReference>